<gene>
    <name type="primary">CCOAOMT5</name>
</gene>
<organism>
    <name type="scientific">Nicotiana tabacum</name>
    <name type="common">Common tobacco</name>
    <dbReference type="NCBI Taxonomy" id="4097"/>
    <lineage>
        <taxon>Eukaryota</taxon>
        <taxon>Viridiplantae</taxon>
        <taxon>Streptophyta</taxon>
        <taxon>Embryophyta</taxon>
        <taxon>Tracheophyta</taxon>
        <taxon>Spermatophyta</taxon>
        <taxon>Magnoliopsida</taxon>
        <taxon>eudicotyledons</taxon>
        <taxon>Gunneridae</taxon>
        <taxon>Pentapetalae</taxon>
        <taxon>asterids</taxon>
        <taxon>lamiids</taxon>
        <taxon>Solanales</taxon>
        <taxon>Solanaceae</taxon>
        <taxon>Nicotianoideae</taxon>
        <taxon>Nicotianeae</taxon>
        <taxon>Nicotiana</taxon>
    </lineage>
</organism>
<feature type="chain" id="PRO_0000165701" description="Caffeoyl-CoA O-methyltransferase 5">
    <location>
        <begin position="1"/>
        <end position="240"/>
    </location>
</feature>
<feature type="binding site" evidence="2">
    <location>
        <position position="14"/>
    </location>
    <ligand>
        <name>substrate</name>
    </ligand>
</feature>
<feature type="binding site" evidence="3">
    <location>
        <position position="56"/>
    </location>
    <ligand>
        <name>S-adenosyl-L-methionine</name>
        <dbReference type="ChEBI" id="CHEBI:59789"/>
    </ligand>
</feature>
<feature type="binding site" evidence="3">
    <location>
        <position position="78"/>
    </location>
    <ligand>
        <name>S-adenosyl-L-methionine</name>
        <dbReference type="ChEBI" id="CHEBI:59789"/>
    </ligand>
</feature>
<feature type="binding site" evidence="3">
    <location>
        <begin position="80"/>
        <end position="81"/>
    </location>
    <ligand>
        <name>S-adenosyl-L-methionine</name>
        <dbReference type="ChEBI" id="CHEBI:59789"/>
    </ligand>
</feature>
<feature type="binding site" evidence="3">
    <location>
        <position position="86"/>
    </location>
    <ligand>
        <name>S-adenosyl-L-methionine</name>
        <dbReference type="ChEBI" id="CHEBI:59789"/>
    </ligand>
</feature>
<feature type="binding site" evidence="3">
    <location>
        <position position="104"/>
    </location>
    <ligand>
        <name>S-adenosyl-L-methionine</name>
        <dbReference type="ChEBI" id="CHEBI:59789"/>
    </ligand>
</feature>
<feature type="binding site" evidence="3">
    <location>
        <position position="133"/>
    </location>
    <ligand>
        <name>S-adenosyl-L-methionine</name>
        <dbReference type="ChEBI" id="CHEBI:59789"/>
    </ligand>
</feature>
<feature type="binding site" evidence="3">
    <location>
        <position position="156"/>
    </location>
    <ligand>
        <name>a divalent metal cation</name>
        <dbReference type="ChEBI" id="CHEBI:60240"/>
    </ligand>
</feature>
<feature type="binding site" evidence="2">
    <location>
        <position position="156"/>
    </location>
    <ligand>
        <name>substrate</name>
    </ligand>
</feature>
<feature type="binding site" evidence="3">
    <location>
        <position position="158"/>
    </location>
    <ligand>
        <name>S-adenosyl-L-methionine</name>
        <dbReference type="ChEBI" id="CHEBI:59789"/>
    </ligand>
</feature>
<feature type="binding site" evidence="3">
    <location>
        <position position="182"/>
    </location>
    <ligand>
        <name>a divalent metal cation</name>
        <dbReference type="ChEBI" id="CHEBI:60240"/>
    </ligand>
</feature>
<feature type="binding site" evidence="3">
    <location>
        <position position="183"/>
    </location>
    <ligand>
        <name>a divalent metal cation</name>
        <dbReference type="ChEBI" id="CHEBI:60240"/>
    </ligand>
</feature>
<feature type="binding site" evidence="2">
    <location>
        <position position="187"/>
    </location>
    <ligand>
        <name>substrate</name>
    </ligand>
</feature>
<feature type="sequence conflict" description="In Ref. 2; AAB80931." evidence="5" ref="2">
    <original>A</original>
    <variation>V</variation>
    <location>
        <position position="218"/>
    </location>
</feature>
<reference key="1">
    <citation type="online journal article" date="1997" name="Plant Gene Register">
        <title>Isolation of tobacco cDNAs encoding caffeoyl-CoA 3-O-methyltransferase.</title>
        <authorList>
            <person name="Busam G."/>
            <person name="Grimmig B."/>
            <person name="Kneusel R.E."/>
            <person name="Matern U."/>
        </authorList>
        <locator>PGR97-039</locator>
    </citation>
    <scope>NUCLEOTIDE SEQUENCE</scope>
    <source>
        <strain>cv. Samsun NN</strain>
    </source>
</reference>
<reference key="2">
    <citation type="journal article" date="1999" name="Plant Physiol.">
        <title>Tobacco O-methyltransferases involved in phenylpropanoid metabolism. The different caffeoyl-coenzyme A/5-hydroxyferuloyl-coenzyme A 3/5-O-methyltransferase and caffeic acid/5-hydroxyferulic acid 3/5-O-methyltransferase classes have distinct substrate specificities and expression patterns.</title>
        <authorList>
            <person name="Maury S."/>
            <person name="Geoffroy P."/>
            <person name="Legrand M."/>
        </authorList>
    </citation>
    <scope>NUCLEOTIDE SEQUENCE [MRNA]</scope>
    <scope>TISSUE SPECIFICITY</scope>
    <scope>SUBSTRATE SPECIFICITY</scope>
    <scope>INDUCTION</scope>
    <source>
        <strain>cv. Samsun NN</strain>
        <tissue>Stem</tissue>
    </source>
</reference>
<name>CAMT5_TOBAC</name>
<protein>
    <recommendedName>
        <fullName>Caffeoyl-CoA O-methyltransferase 5</fullName>
        <ecNumber>2.1.1.104</ecNumber>
    </recommendedName>
    <alternativeName>
        <fullName>Trans-caffeoyl-CoA 3-O-methyltransferase 5</fullName>
        <shortName>CCoAMT-5</shortName>
        <shortName>CCoAOMT-5</shortName>
    </alternativeName>
</protein>
<evidence type="ECO:0000250" key="1"/>
<evidence type="ECO:0000250" key="2">
    <source>
        <dbReference type="UniProtKB" id="Q40313"/>
    </source>
</evidence>
<evidence type="ECO:0000255" key="3">
    <source>
        <dbReference type="PROSITE-ProRule" id="PRU01019"/>
    </source>
</evidence>
<evidence type="ECO:0000269" key="4">
    <source>
    </source>
</evidence>
<evidence type="ECO:0000305" key="5"/>
<accession>O04899</accession>
<accession>O22546</accession>
<sequence length="240" mass="27142">MAENGIKHQEVGHKSLLQSDALYQYILETSVYPREPESMKELREVTAKHPWNLMTTSADEGQFLNMLLKLINAKNTMEIGVYTGYSLLATALAIPDDGKILAMDINRENYEIGLPIIEKAGVAHKIEFREGPALPVLDQLVEDKKNHGTYDFIFVDADKDNYINYHKRIIDLVKVGGLIGYDNTLWNGSVVAPPDAPMRKYVRYYRDFVLELNKALAADPRIEICMLPVGDGITLCRRIT</sequence>
<dbReference type="EC" id="2.1.1.104"/>
<dbReference type="EMBL" id="Z82982">
    <property type="protein sequence ID" value="CAB05369.1"/>
    <property type="molecule type" value="Transcribed_RNA"/>
</dbReference>
<dbReference type="EMBL" id="AF022775">
    <property type="protein sequence ID" value="AAB80931.1"/>
    <property type="molecule type" value="mRNA"/>
</dbReference>
<dbReference type="PIR" id="T04084">
    <property type="entry name" value="T04084"/>
</dbReference>
<dbReference type="RefSeq" id="NP_001311999.1">
    <property type="nucleotide sequence ID" value="NM_001325070.1"/>
</dbReference>
<dbReference type="SMR" id="O04899"/>
<dbReference type="STRING" id="4097.O04899"/>
<dbReference type="PaxDb" id="4097-O04899"/>
<dbReference type="GeneID" id="107770611"/>
<dbReference type="KEGG" id="nta:107770611"/>
<dbReference type="OrthoDB" id="10251242at2759"/>
<dbReference type="UniPathway" id="UPA00711"/>
<dbReference type="Proteomes" id="UP000084051">
    <property type="component" value="Unplaced"/>
</dbReference>
<dbReference type="GO" id="GO:0042409">
    <property type="term" value="F:caffeoyl-CoA O-methyltransferase activity"/>
    <property type="evidence" value="ECO:0007669"/>
    <property type="project" value="UniProtKB-EC"/>
</dbReference>
<dbReference type="GO" id="GO:0046872">
    <property type="term" value="F:metal ion binding"/>
    <property type="evidence" value="ECO:0007669"/>
    <property type="project" value="UniProtKB-KW"/>
</dbReference>
<dbReference type="GO" id="GO:0008757">
    <property type="term" value="F:S-adenosylmethionine-dependent methyltransferase activity"/>
    <property type="evidence" value="ECO:0000318"/>
    <property type="project" value="GO_Central"/>
</dbReference>
<dbReference type="GO" id="GO:0009809">
    <property type="term" value="P:lignin biosynthetic process"/>
    <property type="evidence" value="ECO:0007669"/>
    <property type="project" value="UniProtKB-KW"/>
</dbReference>
<dbReference type="GO" id="GO:0032259">
    <property type="term" value="P:methylation"/>
    <property type="evidence" value="ECO:0007669"/>
    <property type="project" value="UniProtKB-KW"/>
</dbReference>
<dbReference type="CDD" id="cd02440">
    <property type="entry name" value="AdoMet_MTases"/>
    <property type="match status" value="1"/>
</dbReference>
<dbReference type="FunFam" id="3.40.50.150:FF:000147">
    <property type="entry name" value="Caffeoyl-CoA O-methyltransferase 1"/>
    <property type="match status" value="1"/>
</dbReference>
<dbReference type="Gene3D" id="3.40.50.150">
    <property type="entry name" value="Vaccinia Virus protein VP39"/>
    <property type="match status" value="1"/>
</dbReference>
<dbReference type="InterPro" id="IPR050362">
    <property type="entry name" value="Cation-dep_OMT"/>
</dbReference>
<dbReference type="InterPro" id="IPR029063">
    <property type="entry name" value="SAM-dependent_MTases_sf"/>
</dbReference>
<dbReference type="InterPro" id="IPR002935">
    <property type="entry name" value="SAM_O-MeTrfase"/>
</dbReference>
<dbReference type="PANTHER" id="PTHR10509:SF97">
    <property type="entry name" value="CAFFEOYL-COA O-METHYLTRANSFERASE 5"/>
    <property type="match status" value="1"/>
</dbReference>
<dbReference type="PANTHER" id="PTHR10509">
    <property type="entry name" value="O-METHYLTRANSFERASE-RELATED"/>
    <property type="match status" value="1"/>
</dbReference>
<dbReference type="Pfam" id="PF01596">
    <property type="entry name" value="Methyltransf_3"/>
    <property type="match status" value="1"/>
</dbReference>
<dbReference type="SUPFAM" id="SSF53335">
    <property type="entry name" value="S-adenosyl-L-methionine-dependent methyltransferases"/>
    <property type="match status" value="1"/>
</dbReference>
<dbReference type="PROSITE" id="PS51682">
    <property type="entry name" value="SAM_OMT_I"/>
    <property type="match status" value="1"/>
</dbReference>
<proteinExistence type="evidence at transcript level"/>
<comment type="function">
    <text>Methylates caffeoyl-CoA to feruloyl-CoA and 5-hydroxyferuloyl-CoA to sinapoyl-CoA. Plays a role in the synthesis of feruloylated polysaccharides. Involved in the reinforcement of the plant cell wall. Also involved in the responding to wounding or pathogen challenge by the increased formation of cell wall-bound ferulic acid polymers. Methylates 5-hydroxyferulolyl-CoA more efficiently than caffeoyl-CoA.</text>
</comment>
<comment type="catalytic activity">
    <reaction>
        <text>(E)-caffeoyl-CoA + S-adenosyl-L-methionine = (E)-feruloyl-CoA + S-adenosyl-L-homocysteine + H(+)</text>
        <dbReference type="Rhea" id="RHEA:16925"/>
        <dbReference type="ChEBI" id="CHEBI:15378"/>
        <dbReference type="ChEBI" id="CHEBI:57856"/>
        <dbReference type="ChEBI" id="CHEBI:59789"/>
        <dbReference type="ChEBI" id="CHEBI:87136"/>
        <dbReference type="ChEBI" id="CHEBI:87305"/>
        <dbReference type="EC" id="2.1.1.104"/>
    </reaction>
</comment>
<comment type="cofactor">
    <cofactor evidence="1">
        <name>Mg(2+)</name>
        <dbReference type="ChEBI" id="CHEBI:18420"/>
    </cofactor>
    <text evidence="1">Binds 1 Mg(2+) ion per subunit.</text>
</comment>
<comment type="pathway">
    <text>Aromatic compound metabolism; phenylpropanoid biosynthesis.</text>
</comment>
<comment type="tissue specificity">
    <text evidence="4">Expression steadily increases from the bottom to the top of the plant.</text>
</comment>
<comment type="induction">
    <text evidence="4">By wounding and viral infection.</text>
</comment>
<comment type="similarity">
    <text evidence="3">Belongs to the class I-like SAM-binding methyltransferase superfamily. Cation-dependent O-methyltransferase family. CCoAMT subfamily.</text>
</comment>
<keyword id="KW-0438">Lignin biosynthesis</keyword>
<keyword id="KW-0460">Magnesium</keyword>
<keyword id="KW-0479">Metal-binding</keyword>
<keyword id="KW-0489">Methyltransferase</keyword>
<keyword id="KW-1185">Reference proteome</keyword>
<keyword id="KW-0949">S-adenosyl-L-methionine</keyword>
<keyword id="KW-0808">Transferase</keyword>